<name>SPAST_DROYA</name>
<feature type="chain" id="PRO_0000367152" description="Spastin">
    <location>
        <begin position="1"/>
        <end position="758"/>
    </location>
</feature>
<feature type="topological domain" description="Cytoplasmic" evidence="3">
    <location>
        <begin position="1"/>
        <end position="121"/>
    </location>
</feature>
<feature type="intramembrane region" description="Helical" evidence="3">
    <location>
        <begin position="122"/>
        <end position="142"/>
    </location>
</feature>
<feature type="topological domain" description="Cytoplasmic" evidence="3">
    <location>
        <begin position="143"/>
        <end position="758"/>
    </location>
</feature>
<feature type="domain" description="MIT" evidence="2">
    <location>
        <begin position="233"/>
        <end position="308"/>
    </location>
</feature>
<feature type="region of interest" description="Required for localization to punctate cytoplasmic foci" evidence="1">
    <location>
        <begin position="1"/>
        <end position="210"/>
    </location>
</feature>
<feature type="region of interest" description="Disordered" evidence="4">
    <location>
        <begin position="1"/>
        <end position="99"/>
    </location>
</feature>
<feature type="region of interest" description="Disordered" evidence="4">
    <location>
        <begin position="169"/>
        <end position="221"/>
    </location>
</feature>
<feature type="region of interest" description="Sufficient for interaction with microtubules and microtubule severing" evidence="1">
    <location>
        <begin position="208"/>
        <end position="758"/>
    </location>
</feature>
<feature type="region of interest" description="Disordered" evidence="4">
    <location>
        <begin position="353"/>
        <end position="376"/>
    </location>
</feature>
<feature type="region of interest" description="Disordered" evidence="4">
    <location>
        <begin position="390"/>
        <end position="454"/>
    </location>
</feature>
<feature type="region of interest" description="Required for interaction with microtubules" evidence="1">
    <location>
        <begin position="443"/>
        <end position="455"/>
    </location>
</feature>
<feature type="compositionally biased region" description="Low complexity" evidence="4">
    <location>
        <begin position="8"/>
        <end position="29"/>
    </location>
</feature>
<feature type="compositionally biased region" description="Low complexity" evidence="4">
    <location>
        <begin position="43"/>
        <end position="58"/>
    </location>
</feature>
<feature type="compositionally biased region" description="Low complexity" evidence="4">
    <location>
        <begin position="66"/>
        <end position="76"/>
    </location>
</feature>
<feature type="compositionally biased region" description="Low complexity" evidence="4">
    <location>
        <begin position="85"/>
        <end position="95"/>
    </location>
</feature>
<feature type="compositionally biased region" description="Polar residues" evidence="4">
    <location>
        <begin position="169"/>
        <end position="180"/>
    </location>
</feature>
<feature type="compositionally biased region" description="Polar residues" evidence="4">
    <location>
        <begin position="189"/>
        <end position="198"/>
    </location>
</feature>
<feature type="compositionally biased region" description="Polar residues" evidence="4">
    <location>
        <begin position="390"/>
        <end position="406"/>
    </location>
</feature>
<feature type="compositionally biased region" description="Polar residues" evidence="4">
    <location>
        <begin position="425"/>
        <end position="454"/>
    </location>
</feature>
<feature type="binding site" evidence="3">
    <location>
        <begin position="523"/>
        <end position="530"/>
    </location>
    <ligand>
        <name>ATP</name>
        <dbReference type="ChEBI" id="CHEBI:30616"/>
    </ligand>
</feature>
<proteinExistence type="inferred from homology"/>
<reference key="1">
    <citation type="journal article" date="2007" name="Nature">
        <title>Evolution of genes and genomes on the Drosophila phylogeny.</title>
        <authorList>
            <consortium name="Drosophila 12 genomes consortium"/>
        </authorList>
    </citation>
    <scope>NUCLEOTIDE SEQUENCE [LARGE SCALE GENOMIC DNA]</scope>
    <source>
        <strain>Tai18E2 / Tucson 14021-0261.01</strain>
    </source>
</reference>
<evidence type="ECO:0000250" key="1">
    <source>
        <dbReference type="UniProtKB" id="Q8I0P1"/>
    </source>
</evidence>
<evidence type="ECO:0000255" key="2"/>
<evidence type="ECO:0000255" key="3">
    <source>
        <dbReference type="HAMAP-Rule" id="MF_03021"/>
    </source>
</evidence>
<evidence type="ECO:0000256" key="4">
    <source>
        <dbReference type="SAM" id="MobiDB-lite"/>
    </source>
</evidence>
<accession>B4PL32</accession>
<keyword id="KW-0067">ATP-binding</keyword>
<keyword id="KW-0131">Cell cycle</keyword>
<keyword id="KW-0132">Cell division</keyword>
<keyword id="KW-0158">Chromosome</keyword>
<keyword id="KW-0963">Cytoplasm</keyword>
<keyword id="KW-0206">Cytoskeleton</keyword>
<keyword id="KW-0217">Developmental protein</keyword>
<keyword id="KW-0221">Differentiation</keyword>
<keyword id="KW-0413">Isomerase</keyword>
<keyword id="KW-0551">Lipid droplet</keyword>
<keyword id="KW-0472">Membrane</keyword>
<keyword id="KW-0493">Microtubule</keyword>
<keyword id="KW-0498">Mitosis</keyword>
<keyword id="KW-0524">Neurogenesis</keyword>
<keyword id="KW-0547">Nucleotide-binding</keyword>
<comment type="function">
    <text evidence="3">ATP-dependent microtubule severing protein. Stimulates microtubule minus-end depolymerization and poleward microtubule flux in the mitotic spindle. Regulates microtubule stability in the neuromuscular junction synapse. Involved in lipid metabolism by regulating the size and distribution of lipid droplets. Involved in axon regeneration by regulating microtubule severing.</text>
</comment>
<comment type="catalytic activity">
    <reaction evidence="3">
        <text>n ATP + n H2O + a microtubule = n ADP + n phosphate + (n+1) alpha/beta tubulin heterodimers.</text>
        <dbReference type="EC" id="5.6.1.1"/>
    </reaction>
</comment>
<comment type="subunit">
    <text evidence="3">Homohexamer. The homohexamer is stabilized by ATP-binding. The homohexamer may adopt a ring conformation through which microtubules pass prior to being severed. Interacts with microtubules. Interacts with atl; may be involved in microtubule dynamics.</text>
</comment>
<comment type="subcellular location">
    <subcellularLocation>
        <location evidence="3">Membrane</location>
        <topology evidence="3">Peripheral membrane protein</topology>
    </subcellularLocation>
    <subcellularLocation>
        <location evidence="3">Cytoplasm</location>
        <location evidence="3">Cytoskeleton</location>
        <location evidence="3">Microtubule organizing center</location>
        <location evidence="3">Centrosome</location>
    </subcellularLocation>
    <subcellularLocation>
        <location evidence="3">Cytoplasm</location>
        <location evidence="3">Cytoskeleton</location>
    </subcellularLocation>
    <subcellularLocation>
        <location evidence="3">Chromosome</location>
    </subcellularLocation>
    <subcellularLocation>
        <location evidence="3">Lipid droplet</location>
    </subcellularLocation>
    <text evidence="3">Forms an intramembrane hairpin-like structure in the membrane. Colocalizes with cellular microtubule arrays. Localizes to chromosomes from prometaphase/metaphase to anaphase, and this requires microtubules. Localizes to discrete punctate cytoplasmic foci which may correspond to secretory vesicles.</text>
</comment>
<comment type="similarity">
    <text evidence="3">Belongs to the AAA ATPase family. Spastin subfamily.</text>
</comment>
<sequence length="758" mass="82761">MVRTKNQSSSSSASSSSTKSPIKSSSATGSSGGGVGGRQSTHRSSSASNVAAVVAGGSSAAGGGSSSNRRSPGSSPDGDDDTTTTDDLTPTTCSPRSGHHHTYGGYSSSVHKQNLYVVSFPIIFLFNVLRSLIYQLFCIFRYLYGASTKVIYRPHRRDCNIEIVVQNSSKEQQQSLNHPSELNRDSDGQEQQLSNQPQRFRPIQPLEMAANRPGGGYSPGPGDPLLAKQKHHHRRAFEYISKALKIDEENEGHKELAIELYRKGIKELEDGIAVDCWSGRGDVWDRAQRLHDKMQTNLSMARDRLHFLALREQDLQMQRLSLKEKQNEQAPSKPQRTREPMLAGMTNEPMKLRVRSSGYGPKATTGAQPTASGRKLTIGSKRPVNLAVANKSQTLPRNLGSKTSVGAVQRQPAKTAATPPAVRRQFSSGRNTPPQRSRTPINNNGPSGSGASTPVVSVKGVEQKLVQLILDEIVEGGAKVEWTDIAGQDVAKQALQEMVILPSVRPELFTGLRAPAKGLLLFGPPGNGKTLLARAVATECSATFLNISAASLTSKYVGDGEKLVRALFAVARHMQPSIIFIDEVDSLLSERSSSEHEASRRLKTEFLVEFDGLPGNPDGDRIVVLAATNRPQELDEAALRRFTKRVYVSLPDEQTRELLLNRLLQKQGSPLDTEALRRLAKITDGYSGSDLTALAKDAALEPIRELNVEQVKCLDISAMRAITEQDFHSSLKRIRRSVAPQSLNSYEKWSQDYGDITI</sequence>
<dbReference type="EC" id="5.6.1.1" evidence="3"/>
<dbReference type="EMBL" id="CM000160">
    <property type="protein sequence ID" value="EDW99017.1"/>
    <property type="molecule type" value="Genomic_DNA"/>
</dbReference>
<dbReference type="SMR" id="B4PL32"/>
<dbReference type="EnsemblMetazoa" id="FBtr0269957">
    <property type="protein sequence ID" value="FBpp0268449"/>
    <property type="gene ID" value="FBgn0240623"/>
</dbReference>
<dbReference type="EnsemblMetazoa" id="XM_002099269.4">
    <property type="protein sequence ID" value="XP_002099305.1"/>
    <property type="gene ID" value="LOC6538792"/>
</dbReference>
<dbReference type="GeneID" id="6538792"/>
<dbReference type="KEGG" id="dya:Dyak_GE23439"/>
<dbReference type="eggNOG" id="KOG0740">
    <property type="taxonomic scope" value="Eukaryota"/>
</dbReference>
<dbReference type="HOGENOM" id="CLU_000688_21_5_1"/>
<dbReference type="OMA" id="KSREPML"/>
<dbReference type="OrthoDB" id="10251136at2759"/>
<dbReference type="PhylomeDB" id="B4PL32"/>
<dbReference type="Proteomes" id="UP000002282">
    <property type="component" value="Chromosome 3R"/>
</dbReference>
<dbReference type="GO" id="GO:0005813">
    <property type="term" value="C:centrosome"/>
    <property type="evidence" value="ECO:0000250"/>
    <property type="project" value="UniProtKB"/>
</dbReference>
<dbReference type="GO" id="GO:0005694">
    <property type="term" value="C:chromosome"/>
    <property type="evidence" value="ECO:0007669"/>
    <property type="project" value="UniProtKB-SubCell"/>
</dbReference>
<dbReference type="GO" id="GO:0005811">
    <property type="term" value="C:lipid droplet"/>
    <property type="evidence" value="ECO:0007669"/>
    <property type="project" value="UniProtKB-SubCell"/>
</dbReference>
<dbReference type="GO" id="GO:0016020">
    <property type="term" value="C:membrane"/>
    <property type="evidence" value="ECO:0007669"/>
    <property type="project" value="UniProtKB-SubCell"/>
</dbReference>
<dbReference type="GO" id="GO:0005874">
    <property type="term" value="C:microtubule"/>
    <property type="evidence" value="ECO:0007669"/>
    <property type="project" value="UniProtKB-UniRule"/>
</dbReference>
<dbReference type="GO" id="GO:0031594">
    <property type="term" value="C:neuromuscular junction"/>
    <property type="evidence" value="ECO:0007669"/>
    <property type="project" value="EnsemblMetazoa"/>
</dbReference>
<dbReference type="GO" id="GO:0005819">
    <property type="term" value="C:spindle"/>
    <property type="evidence" value="ECO:0007669"/>
    <property type="project" value="UniProtKB-UniRule"/>
</dbReference>
<dbReference type="GO" id="GO:0008021">
    <property type="term" value="C:synaptic vesicle"/>
    <property type="evidence" value="ECO:0007669"/>
    <property type="project" value="EnsemblMetazoa"/>
</dbReference>
<dbReference type="GO" id="GO:0043195">
    <property type="term" value="C:terminal bouton"/>
    <property type="evidence" value="ECO:0007669"/>
    <property type="project" value="EnsemblMetazoa"/>
</dbReference>
<dbReference type="GO" id="GO:0005524">
    <property type="term" value="F:ATP binding"/>
    <property type="evidence" value="ECO:0007669"/>
    <property type="project" value="UniProtKB-UniRule"/>
</dbReference>
<dbReference type="GO" id="GO:0016887">
    <property type="term" value="F:ATP hydrolysis activity"/>
    <property type="evidence" value="ECO:0007669"/>
    <property type="project" value="InterPro"/>
</dbReference>
<dbReference type="GO" id="GO:0008017">
    <property type="term" value="F:microtubule binding"/>
    <property type="evidence" value="ECO:0000250"/>
    <property type="project" value="UniProtKB"/>
</dbReference>
<dbReference type="GO" id="GO:0008568">
    <property type="term" value="F:microtubule severing ATPase activity"/>
    <property type="evidence" value="ECO:0000250"/>
    <property type="project" value="UniProtKB"/>
</dbReference>
<dbReference type="GO" id="GO:0008344">
    <property type="term" value="P:adult locomotory behavior"/>
    <property type="evidence" value="ECO:0007669"/>
    <property type="project" value="UniProtKB-UniRule"/>
</dbReference>
<dbReference type="GO" id="GO:0051301">
    <property type="term" value="P:cell division"/>
    <property type="evidence" value="ECO:0007669"/>
    <property type="project" value="UniProtKB-KW"/>
</dbReference>
<dbReference type="GO" id="GO:0035099">
    <property type="term" value="P:hemocyte migration"/>
    <property type="evidence" value="ECO:0007669"/>
    <property type="project" value="EnsemblMetazoa"/>
</dbReference>
<dbReference type="GO" id="GO:0051013">
    <property type="term" value="P:microtubule severing"/>
    <property type="evidence" value="ECO:0000250"/>
    <property type="project" value="UniProtKB"/>
</dbReference>
<dbReference type="GO" id="GO:0007079">
    <property type="term" value="P:mitotic chromosome movement towards spindle pole"/>
    <property type="evidence" value="ECO:0007669"/>
    <property type="project" value="UniProtKB-UniRule"/>
</dbReference>
<dbReference type="GO" id="GO:0000022">
    <property type="term" value="P:mitotic spindle elongation"/>
    <property type="evidence" value="ECO:0007669"/>
    <property type="project" value="UniProtKB-UniRule"/>
</dbReference>
<dbReference type="GO" id="GO:0007026">
    <property type="term" value="P:negative regulation of microtubule depolymerization"/>
    <property type="evidence" value="ECO:0007669"/>
    <property type="project" value="EnsemblMetazoa"/>
</dbReference>
<dbReference type="GO" id="GO:1900074">
    <property type="term" value="P:negative regulation of neuromuscular synaptic transmission"/>
    <property type="evidence" value="ECO:0007669"/>
    <property type="project" value="EnsemblMetazoa"/>
</dbReference>
<dbReference type="GO" id="GO:0045886">
    <property type="term" value="P:negative regulation of synaptic assembly at neuromuscular junction"/>
    <property type="evidence" value="ECO:0007669"/>
    <property type="project" value="EnsemblMetazoa"/>
</dbReference>
<dbReference type="GO" id="GO:0007399">
    <property type="term" value="P:nervous system development"/>
    <property type="evidence" value="ECO:0007669"/>
    <property type="project" value="UniProtKB-KW"/>
</dbReference>
<dbReference type="GO" id="GO:0048691">
    <property type="term" value="P:positive regulation of axon extension involved in regeneration"/>
    <property type="evidence" value="ECO:0007669"/>
    <property type="project" value="EnsemblMetazoa"/>
</dbReference>
<dbReference type="GO" id="GO:0050775">
    <property type="term" value="P:positive regulation of dendrite morphogenesis"/>
    <property type="evidence" value="ECO:0007669"/>
    <property type="project" value="EnsemblMetazoa"/>
</dbReference>
<dbReference type="GO" id="GO:0045834">
    <property type="term" value="P:positive regulation of lipid metabolic process"/>
    <property type="evidence" value="ECO:0007669"/>
    <property type="project" value="EnsemblMetazoa"/>
</dbReference>
<dbReference type="GO" id="GO:0031117">
    <property type="term" value="P:positive regulation of microtubule depolymerization"/>
    <property type="evidence" value="ECO:0007669"/>
    <property type="project" value="UniProtKB-UniRule"/>
</dbReference>
<dbReference type="GO" id="GO:1900075">
    <property type="term" value="P:positive regulation of neuromuscular synaptic transmission"/>
    <property type="evidence" value="ECO:0007669"/>
    <property type="project" value="EnsemblMetazoa"/>
</dbReference>
<dbReference type="GO" id="GO:0045887">
    <property type="term" value="P:positive regulation of synaptic assembly at neuromuscular junction"/>
    <property type="evidence" value="ECO:0007669"/>
    <property type="project" value="EnsemblMetazoa"/>
</dbReference>
<dbReference type="GO" id="GO:0034214">
    <property type="term" value="P:protein hexamerization"/>
    <property type="evidence" value="ECO:0007669"/>
    <property type="project" value="UniProtKB-UniRule"/>
</dbReference>
<dbReference type="GO" id="GO:2000331">
    <property type="term" value="P:regulation of terminal button organization"/>
    <property type="evidence" value="ECO:0007669"/>
    <property type="project" value="EnsemblMetazoa"/>
</dbReference>
<dbReference type="CDD" id="cd02679">
    <property type="entry name" value="MIT_spastin"/>
    <property type="match status" value="1"/>
</dbReference>
<dbReference type="CDD" id="cd19524">
    <property type="entry name" value="RecA-like_spastin"/>
    <property type="match status" value="1"/>
</dbReference>
<dbReference type="FunFam" id="3.40.50.300:FF:000093">
    <property type="entry name" value="Fidgetin-like 1"/>
    <property type="match status" value="1"/>
</dbReference>
<dbReference type="FunFam" id="1.10.8.60:FF:000036">
    <property type="entry name" value="Spastin"/>
    <property type="match status" value="1"/>
</dbReference>
<dbReference type="FunFam" id="1.20.58.80:FF:000006">
    <property type="entry name" value="Spastin"/>
    <property type="match status" value="1"/>
</dbReference>
<dbReference type="Gene3D" id="1.10.8.60">
    <property type="match status" value="1"/>
</dbReference>
<dbReference type="Gene3D" id="3.40.50.300">
    <property type="entry name" value="P-loop containing nucleotide triphosphate hydrolases"/>
    <property type="match status" value="1"/>
</dbReference>
<dbReference type="Gene3D" id="1.20.58.80">
    <property type="entry name" value="Phosphotransferase system, lactose/cellobiose-type IIA subunit"/>
    <property type="match status" value="1"/>
</dbReference>
<dbReference type="HAMAP" id="MF_03021">
    <property type="entry name" value="Spastin"/>
    <property type="match status" value="1"/>
</dbReference>
<dbReference type="InterPro" id="IPR003593">
    <property type="entry name" value="AAA+_ATPase"/>
</dbReference>
<dbReference type="InterPro" id="IPR041569">
    <property type="entry name" value="AAA_lid_3"/>
</dbReference>
<dbReference type="InterPro" id="IPR003959">
    <property type="entry name" value="ATPase_AAA_core"/>
</dbReference>
<dbReference type="InterPro" id="IPR003960">
    <property type="entry name" value="ATPase_AAA_CS"/>
</dbReference>
<dbReference type="InterPro" id="IPR007330">
    <property type="entry name" value="MIT_dom"/>
</dbReference>
<dbReference type="InterPro" id="IPR050304">
    <property type="entry name" value="MT-severing_AAA_ATPase"/>
</dbReference>
<dbReference type="InterPro" id="IPR027417">
    <property type="entry name" value="P-loop_NTPase"/>
</dbReference>
<dbReference type="InterPro" id="IPR015415">
    <property type="entry name" value="Spast_Vps4_C"/>
</dbReference>
<dbReference type="InterPro" id="IPR017179">
    <property type="entry name" value="Spastin"/>
</dbReference>
<dbReference type="PANTHER" id="PTHR23074">
    <property type="entry name" value="AAA DOMAIN-CONTAINING"/>
    <property type="match status" value="1"/>
</dbReference>
<dbReference type="PANTHER" id="PTHR23074:SF86">
    <property type="entry name" value="SPASTIN"/>
    <property type="match status" value="1"/>
</dbReference>
<dbReference type="Pfam" id="PF00004">
    <property type="entry name" value="AAA"/>
    <property type="match status" value="1"/>
</dbReference>
<dbReference type="Pfam" id="PF17862">
    <property type="entry name" value="AAA_lid_3"/>
    <property type="match status" value="1"/>
</dbReference>
<dbReference type="Pfam" id="PF09336">
    <property type="entry name" value="Vps4_C"/>
    <property type="match status" value="1"/>
</dbReference>
<dbReference type="SMART" id="SM00382">
    <property type="entry name" value="AAA"/>
    <property type="match status" value="1"/>
</dbReference>
<dbReference type="SMART" id="SM00745">
    <property type="entry name" value="MIT"/>
    <property type="match status" value="1"/>
</dbReference>
<dbReference type="SUPFAM" id="SSF52540">
    <property type="entry name" value="P-loop containing nucleoside triphosphate hydrolases"/>
    <property type="match status" value="1"/>
</dbReference>
<dbReference type="PROSITE" id="PS00674">
    <property type="entry name" value="AAA"/>
    <property type="match status" value="1"/>
</dbReference>
<gene>
    <name evidence="3" type="primary">spas</name>
    <name type="ORF">GE23439</name>
</gene>
<protein>
    <recommendedName>
        <fullName evidence="3">Spastin</fullName>
        <ecNumber evidence="3">5.6.1.1</ecNumber>
    </recommendedName>
</protein>
<organism>
    <name type="scientific">Drosophila yakuba</name>
    <name type="common">Fruit fly</name>
    <dbReference type="NCBI Taxonomy" id="7245"/>
    <lineage>
        <taxon>Eukaryota</taxon>
        <taxon>Metazoa</taxon>
        <taxon>Ecdysozoa</taxon>
        <taxon>Arthropoda</taxon>
        <taxon>Hexapoda</taxon>
        <taxon>Insecta</taxon>
        <taxon>Pterygota</taxon>
        <taxon>Neoptera</taxon>
        <taxon>Endopterygota</taxon>
        <taxon>Diptera</taxon>
        <taxon>Brachycera</taxon>
        <taxon>Muscomorpha</taxon>
        <taxon>Ephydroidea</taxon>
        <taxon>Drosophilidae</taxon>
        <taxon>Drosophila</taxon>
        <taxon>Sophophora</taxon>
    </lineage>
</organism>